<comment type="similarity">
    <text evidence="1">Belongs to the bacterial ribosomal protein bL32 family.</text>
</comment>
<accession>A1TLD5</accession>
<evidence type="ECO:0000255" key="1">
    <source>
        <dbReference type="HAMAP-Rule" id="MF_00340"/>
    </source>
</evidence>
<evidence type="ECO:0000256" key="2">
    <source>
        <dbReference type="SAM" id="MobiDB-lite"/>
    </source>
</evidence>
<evidence type="ECO:0000305" key="3"/>
<gene>
    <name evidence="1" type="primary">rpmF</name>
    <name type="ordered locus">Aave_1181</name>
</gene>
<sequence length="60" mass="6687">MAVQQNKKSPSKRGMHRSHNALTVPGIAVEPTTGETHLRHHISPNGFYRGRQVLKNKSEA</sequence>
<keyword id="KW-0687">Ribonucleoprotein</keyword>
<keyword id="KW-0689">Ribosomal protein</keyword>
<name>RL32_PARC0</name>
<reference key="1">
    <citation type="submission" date="2006-12" db="EMBL/GenBank/DDBJ databases">
        <title>Complete sequence of Acidovorax avenae subsp. citrulli AAC00-1.</title>
        <authorList>
            <person name="Copeland A."/>
            <person name="Lucas S."/>
            <person name="Lapidus A."/>
            <person name="Barry K."/>
            <person name="Detter J.C."/>
            <person name="Glavina del Rio T."/>
            <person name="Dalin E."/>
            <person name="Tice H."/>
            <person name="Pitluck S."/>
            <person name="Kiss H."/>
            <person name="Brettin T."/>
            <person name="Bruce D."/>
            <person name="Han C."/>
            <person name="Tapia R."/>
            <person name="Gilna P."/>
            <person name="Schmutz J."/>
            <person name="Larimer F."/>
            <person name="Land M."/>
            <person name="Hauser L."/>
            <person name="Kyrpides N."/>
            <person name="Kim E."/>
            <person name="Stahl D."/>
            <person name="Richardson P."/>
        </authorList>
    </citation>
    <scope>NUCLEOTIDE SEQUENCE [LARGE SCALE GENOMIC DNA]</scope>
    <source>
        <strain>AAC00-1</strain>
    </source>
</reference>
<dbReference type="EMBL" id="CP000512">
    <property type="protein sequence ID" value="ABM31773.1"/>
    <property type="molecule type" value="Genomic_DNA"/>
</dbReference>
<dbReference type="RefSeq" id="WP_011794326.1">
    <property type="nucleotide sequence ID" value="NC_008752.1"/>
</dbReference>
<dbReference type="SMR" id="A1TLD5"/>
<dbReference type="STRING" id="397945.Aave_1181"/>
<dbReference type="GeneID" id="79790841"/>
<dbReference type="KEGG" id="aav:Aave_1181"/>
<dbReference type="eggNOG" id="COG0333">
    <property type="taxonomic scope" value="Bacteria"/>
</dbReference>
<dbReference type="HOGENOM" id="CLU_129084_2_1_4"/>
<dbReference type="OrthoDB" id="9801927at2"/>
<dbReference type="Proteomes" id="UP000002596">
    <property type="component" value="Chromosome"/>
</dbReference>
<dbReference type="GO" id="GO:0015934">
    <property type="term" value="C:large ribosomal subunit"/>
    <property type="evidence" value="ECO:0007669"/>
    <property type="project" value="InterPro"/>
</dbReference>
<dbReference type="GO" id="GO:0003735">
    <property type="term" value="F:structural constituent of ribosome"/>
    <property type="evidence" value="ECO:0007669"/>
    <property type="project" value="InterPro"/>
</dbReference>
<dbReference type="GO" id="GO:0006412">
    <property type="term" value="P:translation"/>
    <property type="evidence" value="ECO:0007669"/>
    <property type="project" value="UniProtKB-UniRule"/>
</dbReference>
<dbReference type="HAMAP" id="MF_00340">
    <property type="entry name" value="Ribosomal_bL32"/>
    <property type="match status" value="1"/>
</dbReference>
<dbReference type="InterPro" id="IPR002677">
    <property type="entry name" value="Ribosomal_bL32"/>
</dbReference>
<dbReference type="InterPro" id="IPR044957">
    <property type="entry name" value="Ribosomal_bL32_bact"/>
</dbReference>
<dbReference type="InterPro" id="IPR011332">
    <property type="entry name" value="Ribosomal_zn-bd"/>
</dbReference>
<dbReference type="NCBIfam" id="TIGR01031">
    <property type="entry name" value="rpmF_bact"/>
    <property type="match status" value="1"/>
</dbReference>
<dbReference type="PANTHER" id="PTHR35534">
    <property type="entry name" value="50S RIBOSOMAL PROTEIN L32"/>
    <property type="match status" value="1"/>
</dbReference>
<dbReference type="PANTHER" id="PTHR35534:SF1">
    <property type="entry name" value="LARGE RIBOSOMAL SUBUNIT PROTEIN BL32"/>
    <property type="match status" value="1"/>
</dbReference>
<dbReference type="Pfam" id="PF01783">
    <property type="entry name" value="Ribosomal_L32p"/>
    <property type="match status" value="1"/>
</dbReference>
<dbReference type="SUPFAM" id="SSF57829">
    <property type="entry name" value="Zn-binding ribosomal proteins"/>
    <property type="match status" value="1"/>
</dbReference>
<proteinExistence type="inferred from homology"/>
<feature type="chain" id="PRO_0000296410" description="Large ribosomal subunit protein bL32">
    <location>
        <begin position="1"/>
        <end position="60"/>
    </location>
</feature>
<feature type="region of interest" description="Disordered" evidence="2">
    <location>
        <begin position="1"/>
        <end position="60"/>
    </location>
</feature>
<feature type="compositionally biased region" description="Basic residues" evidence="2">
    <location>
        <begin position="9"/>
        <end position="19"/>
    </location>
</feature>
<organism>
    <name type="scientific">Paracidovorax citrulli (strain AAC00-1)</name>
    <name type="common">Acidovorax citrulli</name>
    <dbReference type="NCBI Taxonomy" id="397945"/>
    <lineage>
        <taxon>Bacteria</taxon>
        <taxon>Pseudomonadati</taxon>
        <taxon>Pseudomonadota</taxon>
        <taxon>Betaproteobacteria</taxon>
        <taxon>Burkholderiales</taxon>
        <taxon>Comamonadaceae</taxon>
        <taxon>Paracidovorax</taxon>
    </lineage>
</organism>
<protein>
    <recommendedName>
        <fullName evidence="1">Large ribosomal subunit protein bL32</fullName>
    </recommendedName>
    <alternativeName>
        <fullName evidence="3">50S ribosomal protein L32</fullName>
    </alternativeName>
</protein>